<reference key="1">
    <citation type="journal article" date="2006" name="Proc. Natl. Acad. Sci. U.S.A.">
        <title>The complete genome sequence of a chronic atrophic gastritis Helicobacter pylori strain: evolution during disease progression.</title>
        <authorList>
            <person name="Oh J.D."/>
            <person name="Kling-Baeckhed H."/>
            <person name="Giannakis M."/>
            <person name="Xu J."/>
            <person name="Fulton R.S."/>
            <person name="Fulton L.A."/>
            <person name="Cordum H.S."/>
            <person name="Wang C."/>
            <person name="Elliott G."/>
            <person name="Edwards J."/>
            <person name="Mardis E.R."/>
            <person name="Engstrand L.G."/>
            <person name="Gordon J.I."/>
        </authorList>
    </citation>
    <scope>NUCLEOTIDE SEQUENCE [LARGE SCALE GENOMIC DNA]</scope>
    <source>
        <strain>HPAG1</strain>
    </source>
</reference>
<comment type="function">
    <text evidence="1">Binds directly to 23S ribosomal RNA and is necessary for the in vitro assembly process of the 50S ribosomal subunit. It is not involved in the protein synthesizing functions of that subunit.</text>
</comment>
<comment type="similarity">
    <text evidence="1">Belongs to the bacterial ribosomal protein bL20 family.</text>
</comment>
<accession>Q1CV30</accession>
<sequence>MRVKTGVVRRRRHKKVLKLARGFYSGRRKHFRKAKEQLERSMYYAFRDRKQKKREFRSLWVVRINAACRMHNTSYSRFMHALKVANIELDRKVLADMAMNDMQAFKSVLESVKEHL</sequence>
<dbReference type="EMBL" id="CP000241">
    <property type="protein sequence ID" value="ABF84192.1"/>
    <property type="molecule type" value="Genomic_DNA"/>
</dbReference>
<dbReference type="RefSeq" id="WP_001264175.1">
    <property type="nucleotide sequence ID" value="NC_008086.1"/>
</dbReference>
<dbReference type="SMR" id="Q1CV30"/>
<dbReference type="KEGG" id="hpa:HPAG1_0125"/>
<dbReference type="HOGENOM" id="CLU_123265_0_1_7"/>
<dbReference type="GO" id="GO:1990904">
    <property type="term" value="C:ribonucleoprotein complex"/>
    <property type="evidence" value="ECO:0007669"/>
    <property type="project" value="UniProtKB-KW"/>
</dbReference>
<dbReference type="GO" id="GO:0005840">
    <property type="term" value="C:ribosome"/>
    <property type="evidence" value="ECO:0007669"/>
    <property type="project" value="UniProtKB-KW"/>
</dbReference>
<dbReference type="GO" id="GO:0019843">
    <property type="term" value="F:rRNA binding"/>
    <property type="evidence" value="ECO:0007669"/>
    <property type="project" value="UniProtKB-UniRule"/>
</dbReference>
<dbReference type="GO" id="GO:0003735">
    <property type="term" value="F:structural constituent of ribosome"/>
    <property type="evidence" value="ECO:0007669"/>
    <property type="project" value="InterPro"/>
</dbReference>
<dbReference type="GO" id="GO:0000027">
    <property type="term" value="P:ribosomal large subunit assembly"/>
    <property type="evidence" value="ECO:0007669"/>
    <property type="project" value="UniProtKB-UniRule"/>
</dbReference>
<dbReference type="GO" id="GO:0006412">
    <property type="term" value="P:translation"/>
    <property type="evidence" value="ECO:0007669"/>
    <property type="project" value="InterPro"/>
</dbReference>
<dbReference type="CDD" id="cd07026">
    <property type="entry name" value="Ribosomal_L20"/>
    <property type="match status" value="1"/>
</dbReference>
<dbReference type="FunFam" id="1.10.1900.20:FF:000001">
    <property type="entry name" value="50S ribosomal protein L20"/>
    <property type="match status" value="1"/>
</dbReference>
<dbReference type="Gene3D" id="6.10.160.10">
    <property type="match status" value="1"/>
</dbReference>
<dbReference type="Gene3D" id="1.10.1900.20">
    <property type="entry name" value="Ribosomal protein L20"/>
    <property type="match status" value="1"/>
</dbReference>
<dbReference type="HAMAP" id="MF_00382">
    <property type="entry name" value="Ribosomal_bL20"/>
    <property type="match status" value="1"/>
</dbReference>
<dbReference type="InterPro" id="IPR005813">
    <property type="entry name" value="Ribosomal_bL20"/>
</dbReference>
<dbReference type="InterPro" id="IPR049946">
    <property type="entry name" value="RIBOSOMAL_L20_CS"/>
</dbReference>
<dbReference type="InterPro" id="IPR035566">
    <property type="entry name" value="Ribosomal_protein_bL20_C"/>
</dbReference>
<dbReference type="NCBIfam" id="TIGR01032">
    <property type="entry name" value="rplT_bact"/>
    <property type="match status" value="1"/>
</dbReference>
<dbReference type="PANTHER" id="PTHR10986">
    <property type="entry name" value="39S RIBOSOMAL PROTEIN L20"/>
    <property type="match status" value="1"/>
</dbReference>
<dbReference type="Pfam" id="PF00453">
    <property type="entry name" value="Ribosomal_L20"/>
    <property type="match status" value="1"/>
</dbReference>
<dbReference type="PRINTS" id="PR00062">
    <property type="entry name" value="RIBOSOMALL20"/>
</dbReference>
<dbReference type="SUPFAM" id="SSF74731">
    <property type="entry name" value="Ribosomal protein L20"/>
    <property type="match status" value="1"/>
</dbReference>
<dbReference type="PROSITE" id="PS00937">
    <property type="entry name" value="RIBOSOMAL_L20"/>
    <property type="match status" value="1"/>
</dbReference>
<proteinExistence type="inferred from homology"/>
<name>RL20_HELPH</name>
<gene>
    <name evidence="1" type="primary">rplT</name>
    <name type="ordered locus">HPAG1_0125</name>
</gene>
<feature type="chain" id="PRO_1000048992" description="Large ribosomal subunit protein bL20">
    <location>
        <begin position="1"/>
        <end position="116"/>
    </location>
</feature>
<keyword id="KW-0687">Ribonucleoprotein</keyword>
<keyword id="KW-0689">Ribosomal protein</keyword>
<keyword id="KW-0694">RNA-binding</keyword>
<keyword id="KW-0699">rRNA-binding</keyword>
<organism>
    <name type="scientific">Helicobacter pylori (strain HPAG1)</name>
    <dbReference type="NCBI Taxonomy" id="357544"/>
    <lineage>
        <taxon>Bacteria</taxon>
        <taxon>Pseudomonadati</taxon>
        <taxon>Campylobacterota</taxon>
        <taxon>Epsilonproteobacteria</taxon>
        <taxon>Campylobacterales</taxon>
        <taxon>Helicobacteraceae</taxon>
        <taxon>Helicobacter</taxon>
    </lineage>
</organism>
<evidence type="ECO:0000255" key="1">
    <source>
        <dbReference type="HAMAP-Rule" id="MF_00382"/>
    </source>
</evidence>
<evidence type="ECO:0000305" key="2"/>
<protein>
    <recommendedName>
        <fullName evidence="1">Large ribosomal subunit protein bL20</fullName>
    </recommendedName>
    <alternativeName>
        <fullName evidence="2">50S ribosomal protein L20</fullName>
    </alternativeName>
</protein>